<sequence length="489" mass="55732">MSDDLPIDIHSSKLLDWLVSRRHCNKDWQKSVVAIREKIKHAILDMPESPKIVELLQGAYINYFHCCQIIEILRDTEKDTKNFLGFYSSQRMKDWQEIEGMYKKDNVYLAEAAQILQRLAQYEIPALRKQISKMDQSVTDAIRKHSEYGKQAEDGRKQFEKEISRMQLKGVHLRKELLELAADLPAFYEKITAEIRKISAARDYFQAFRDYMSLGAAPKDAAPILPIIGLIGERGLDVTTYEWKYNQKPDKVEKPNFEMLLTAAEDSDEIDFGGGDEIDFGIAAEDDAVIDFSAVVDLVADDTGAVGEAIASGQDALHLLENSEAQKAVKHELIELLAFLSMRLDDETRETTADVLIRGAEKRPDGVAAVTEKRLKTWITEVEGILKELENPQKVHLFKIRGSPQYVEQVVEELEKKRDMEHRYKRLQTLMTENQETARQSVTKSNVELKTIVESTRVLQKQIEAEISKKYNGRRVNLMGGINQALGGN</sequence>
<feature type="chain" id="PRO_0000220520" description="CDK5RAP3 protein homolog">
    <location>
        <begin position="1"/>
        <end position="489"/>
    </location>
</feature>
<protein>
    <recommendedName>
        <fullName>CDK5RAP3 protein homolog</fullName>
    </recommendedName>
</protein>
<accession>Q9U2Y2</accession>
<comment type="function">
    <text evidence="1">Substrate adapter of E3 ligase complexes mediating ufmylation, the covalent attachment of the ubiquitin-like modifier UFM1 to substrate proteins, and which is involved in various processes, such as ribosome recycling and reticulophagy (also called ER-phagy).</text>
</comment>
<comment type="similarity">
    <text evidence="2">Belongs to the CDK5RAP3 family.</text>
</comment>
<name>CK5P3_CAEEL</name>
<dbReference type="EMBL" id="AL110477">
    <property type="protein sequence ID" value="CAB54323.1"/>
    <property type="molecule type" value="Genomic_DNA"/>
</dbReference>
<dbReference type="PIR" id="T26435">
    <property type="entry name" value="T26435"/>
</dbReference>
<dbReference type="RefSeq" id="NP_001370069.1">
    <property type="nucleotide sequence ID" value="NM_001383506.2"/>
</dbReference>
<dbReference type="RefSeq" id="NP_507910.1">
    <property type="nucleotide sequence ID" value="NM_075509.4"/>
</dbReference>
<dbReference type="SMR" id="Q9U2Y2"/>
<dbReference type="BioGRID" id="45287">
    <property type="interactions" value="7"/>
</dbReference>
<dbReference type="FunCoup" id="Q9U2Y2">
    <property type="interactions" value="2194"/>
</dbReference>
<dbReference type="STRING" id="6239.Y113G7B.16.1"/>
<dbReference type="PaxDb" id="6239-Y113G7B.16"/>
<dbReference type="PeptideAtlas" id="Q9U2Y2"/>
<dbReference type="EnsemblMetazoa" id="Y113G7B.16.1">
    <property type="protein sequence ID" value="Y113G7B.16.1"/>
    <property type="gene ID" value="WBGene00013765"/>
</dbReference>
<dbReference type="GeneID" id="180327"/>
<dbReference type="UCSC" id="Y113G7B.16">
    <property type="organism name" value="c. elegans"/>
</dbReference>
<dbReference type="AGR" id="WB:WBGene00013765"/>
<dbReference type="WormBase" id="Y113G7B.16">
    <property type="protein sequence ID" value="CE23296"/>
    <property type="gene ID" value="WBGene00013765"/>
    <property type="gene designation" value="cdkr-3"/>
</dbReference>
<dbReference type="eggNOG" id="KOG2607">
    <property type="taxonomic scope" value="Eukaryota"/>
</dbReference>
<dbReference type="GeneTree" id="ENSGT00390000000713"/>
<dbReference type="HOGENOM" id="CLU_025645_1_0_1"/>
<dbReference type="InParanoid" id="Q9U2Y2"/>
<dbReference type="OMA" id="CRLYEKN"/>
<dbReference type="OrthoDB" id="340432at2759"/>
<dbReference type="PhylomeDB" id="Q9U2Y2"/>
<dbReference type="PRO" id="PR:Q9U2Y2"/>
<dbReference type="Proteomes" id="UP000001940">
    <property type="component" value="Chromosome V"/>
</dbReference>
<dbReference type="Bgee" id="WBGene00013765">
    <property type="expression patterns" value="Expressed in germ line (C elegans) and 4 other cell types or tissues"/>
</dbReference>
<dbReference type="GO" id="GO:0012505">
    <property type="term" value="C:endomembrane system"/>
    <property type="evidence" value="ECO:0000318"/>
    <property type="project" value="GO_Central"/>
</dbReference>
<dbReference type="GO" id="GO:0036498">
    <property type="term" value="P:IRE1-mediated unfolded protein response"/>
    <property type="evidence" value="ECO:0007007"/>
    <property type="project" value="WormBase"/>
</dbReference>
<dbReference type="GO" id="GO:0000079">
    <property type="term" value="P:regulation of cyclin-dependent protein serine/threonine kinase activity"/>
    <property type="evidence" value="ECO:0000250"/>
    <property type="project" value="UniProtKB"/>
</dbReference>
<dbReference type="GO" id="GO:0007346">
    <property type="term" value="P:regulation of mitotic cell cycle"/>
    <property type="evidence" value="ECO:0000318"/>
    <property type="project" value="GO_Central"/>
</dbReference>
<dbReference type="InterPro" id="IPR008491">
    <property type="entry name" value="CDK5RAP3"/>
</dbReference>
<dbReference type="PANTHER" id="PTHR14894">
    <property type="entry name" value="CDK5 REGULATORY SUBUNIT-ASSOCIATED PROTEIN 3"/>
    <property type="match status" value="1"/>
</dbReference>
<dbReference type="PANTHER" id="PTHR14894:SF0">
    <property type="entry name" value="CDK5 REGULATORY SUBUNIT-ASSOCIATED PROTEIN 3"/>
    <property type="match status" value="1"/>
</dbReference>
<dbReference type="Pfam" id="PF05600">
    <property type="entry name" value="CDK5RAP3"/>
    <property type="match status" value="1"/>
</dbReference>
<reference key="1">
    <citation type="journal article" date="1998" name="Science">
        <title>Genome sequence of the nematode C. elegans: a platform for investigating biology.</title>
        <authorList>
            <consortium name="The C. elegans sequencing consortium"/>
        </authorList>
    </citation>
    <scope>NUCLEOTIDE SEQUENCE [LARGE SCALE GENOMIC DNA]</scope>
    <source>
        <strain>Bristol N2</strain>
    </source>
</reference>
<gene>
    <name evidence="3" type="primary">cdkr-3</name>
    <name evidence="3" type="ORF">Y113G7B.16</name>
</gene>
<proteinExistence type="inferred from homology"/>
<keyword id="KW-1185">Reference proteome</keyword>
<keyword id="KW-0833">Ubl conjugation pathway</keyword>
<organism>
    <name type="scientific">Caenorhabditis elegans</name>
    <dbReference type="NCBI Taxonomy" id="6239"/>
    <lineage>
        <taxon>Eukaryota</taxon>
        <taxon>Metazoa</taxon>
        <taxon>Ecdysozoa</taxon>
        <taxon>Nematoda</taxon>
        <taxon>Chromadorea</taxon>
        <taxon>Rhabditida</taxon>
        <taxon>Rhabditina</taxon>
        <taxon>Rhabditomorpha</taxon>
        <taxon>Rhabditoidea</taxon>
        <taxon>Rhabditidae</taxon>
        <taxon>Peloderinae</taxon>
        <taxon>Caenorhabditis</taxon>
    </lineage>
</organism>
<evidence type="ECO:0000250" key="1">
    <source>
        <dbReference type="UniProtKB" id="Q96JB5"/>
    </source>
</evidence>
<evidence type="ECO:0000305" key="2"/>
<evidence type="ECO:0000312" key="3">
    <source>
        <dbReference type="WormBase" id="Y113G7B.16"/>
    </source>
</evidence>